<dbReference type="EC" id="2.6.1.52" evidence="1"/>
<dbReference type="EMBL" id="CP000891">
    <property type="protein sequence ID" value="ABX49571.1"/>
    <property type="molecule type" value="Genomic_DNA"/>
</dbReference>
<dbReference type="RefSeq" id="WP_006086766.1">
    <property type="nucleotide sequence ID" value="NC_009997.1"/>
</dbReference>
<dbReference type="SMR" id="A9L2Y2"/>
<dbReference type="GeneID" id="11772520"/>
<dbReference type="KEGG" id="sbn:Sbal195_2403"/>
<dbReference type="HOGENOM" id="CLU_034866_0_2_6"/>
<dbReference type="UniPathway" id="UPA00135">
    <property type="reaction ID" value="UER00197"/>
</dbReference>
<dbReference type="UniPathway" id="UPA00244">
    <property type="reaction ID" value="UER00311"/>
</dbReference>
<dbReference type="Proteomes" id="UP000000770">
    <property type="component" value="Chromosome"/>
</dbReference>
<dbReference type="GO" id="GO:0005737">
    <property type="term" value="C:cytoplasm"/>
    <property type="evidence" value="ECO:0007669"/>
    <property type="project" value="UniProtKB-SubCell"/>
</dbReference>
<dbReference type="GO" id="GO:0004648">
    <property type="term" value="F:O-phospho-L-serine:2-oxoglutarate aminotransferase activity"/>
    <property type="evidence" value="ECO:0007669"/>
    <property type="project" value="UniProtKB-UniRule"/>
</dbReference>
<dbReference type="GO" id="GO:0030170">
    <property type="term" value="F:pyridoxal phosphate binding"/>
    <property type="evidence" value="ECO:0007669"/>
    <property type="project" value="UniProtKB-UniRule"/>
</dbReference>
<dbReference type="GO" id="GO:0006564">
    <property type="term" value="P:L-serine biosynthetic process"/>
    <property type="evidence" value="ECO:0007669"/>
    <property type="project" value="UniProtKB-UniRule"/>
</dbReference>
<dbReference type="GO" id="GO:0008615">
    <property type="term" value="P:pyridoxine biosynthetic process"/>
    <property type="evidence" value="ECO:0007669"/>
    <property type="project" value="UniProtKB-UniRule"/>
</dbReference>
<dbReference type="FunFam" id="3.40.640.10:FF:000010">
    <property type="entry name" value="Phosphoserine aminotransferase"/>
    <property type="match status" value="1"/>
</dbReference>
<dbReference type="FunFam" id="3.90.1150.10:FF:000006">
    <property type="entry name" value="Phosphoserine aminotransferase"/>
    <property type="match status" value="1"/>
</dbReference>
<dbReference type="Gene3D" id="3.90.1150.10">
    <property type="entry name" value="Aspartate Aminotransferase, domain 1"/>
    <property type="match status" value="1"/>
</dbReference>
<dbReference type="Gene3D" id="3.40.640.10">
    <property type="entry name" value="Type I PLP-dependent aspartate aminotransferase-like (Major domain)"/>
    <property type="match status" value="1"/>
</dbReference>
<dbReference type="HAMAP" id="MF_00160">
    <property type="entry name" value="SerC_aminotrans_5"/>
    <property type="match status" value="1"/>
</dbReference>
<dbReference type="InterPro" id="IPR000192">
    <property type="entry name" value="Aminotrans_V_dom"/>
</dbReference>
<dbReference type="InterPro" id="IPR020578">
    <property type="entry name" value="Aminotrans_V_PyrdxlP_BS"/>
</dbReference>
<dbReference type="InterPro" id="IPR022278">
    <property type="entry name" value="Pser_aminoTfrase"/>
</dbReference>
<dbReference type="InterPro" id="IPR015424">
    <property type="entry name" value="PyrdxlP-dep_Trfase"/>
</dbReference>
<dbReference type="InterPro" id="IPR015421">
    <property type="entry name" value="PyrdxlP-dep_Trfase_major"/>
</dbReference>
<dbReference type="InterPro" id="IPR015422">
    <property type="entry name" value="PyrdxlP-dep_Trfase_small"/>
</dbReference>
<dbReference type="NCBIfam" id="NF003764">
    <property type="entry name" value="PRK05355.1"/>
    <property type="match status" value="1"/>
</dbReference>
<dbReference type="NCBIfam" id="TIGR01364">
    <property type="entry name" value="serC_1"/>
    <property type="match status" value="1"/>
</dbReference>
<dbReference type="PANTHER" id="PTHR43247">
    <property type="entry name" value="PHOSPHOSERINE AMINOTRANSFERASE"/>
    <property type="match status" value="1"/>
</dbReference>
<dbReference type="PANTHER" id="PTHR43247:SF1">
    <property type="entry name" value="PHOSPHOSERINE AMINOTRANSFERASE"/>
    <property type="match status" value="1"/>
</dbReference>
<dbReference type="Pfam" id="PF00266">
    <property type="entry name" value="Aminotran_5"/>
    <property type="match status" value="1"/>
</dbReference>
<dbReference type="PIRSF" id="PIRSF000525">
    <property type="entry name" value="SerC"/>
    <property type="match status" value="1"/>
</dbReference>
<dbReference type="SUPFAM" id="SSF53383">
    <property type="entry name" value="PLP-dependent transferases"/>
    <property type="match status" value="1"/>
</dbReference>
<dbReference type="PROSITE" id="PS00595">
    <property type="entry name" value="AA_TRANSFER_CLASS_5"/>
    <property type="match status" value="1"/>
</dbReference>
<proteinExistence type="inferred from homology"/>
<accession>A9L2Y2</accession>
<comment type="function">
    <text evidence="1">Catalyzes the reversible conversion of 3-phosphohydroxypyruvate to phosphoserine and of 3-hydroxy-2-oxo-4-phosphonooxybutanoate to phosphohydroxythreonine.</text>
</comment>
<comment type="catalytic activity">
    <reaction evidence="1">
        <text>O-phospho-L-serine + 2-oxoglutarate = 3-phosphooxypyruvate + L-glutamate</text>
        <dbReference type="Rhea" id="RHEA:14329"/>
        <dbReference type="ChEBI" id="CHEBI:16810"/>
        <dbReference type="ChEBI" id="CHEBI:18110"/>
        <dbReference type="ChEBI" id="CHEBI:29985"/>
        <dbReference type="ChEBI" id="CHEBI:57524"/>
        <dbReference type="EC" id="2.6.1.52"/>
    </reaction>
</comment>
<comment type="catalytic activity">
    <reaction evidence="1">
        <text>4-(phosphooxy)-L-threonine + 2-oxoglutarate = (R)-3-hydroxy-2-oxo-4-phosphooxybutanoate + L-glutamate</text>
        <dbReference type="Rhea" id="RHEA:16573"/>
        <dbReference type="ChEBI" id="CHEBI:16810"/>
        <dbReference type="ChEBI" id="CHEBI:29985"/>
        <dbReference type="ChEBI" id="CHEBI:58452"/>
        <dbReference type="ChEBI" id="CHEBI:58538"/>
        <dbReference type="EC" id="2.6.1.52"/>
    </reaction>
</comment>
<comment type="cofactor">
    <cofactor evidence="1">
        <name>pyridoxal 5'-phosphate</name>
        <dbReference type="ChEBI" id="CHEBI:597326"/>
    </cofactor>
    <text evidence="1">Binds 1 pyridoxal phosphate per subunit.</text>
</comment>
<comment type="pathway">
    <text evidence="1">Amino-acid biosynthesis; L-serine biosynthesis; L-serine from 3-phospho-D-glycerate: step 2/3.</text>
</comment>
<comment type="pathway">
    <text evidence="1">Cofactor biosynthesis; pyridoxine 5'-phosphate biosynthesis; pyridoxine 5'-phosphate from D-erythrose 4-phosphate: step 3/5.</text>
</comment>
<comment type="subunit">
    <text evidence="1">Homodimer.</text>
</comment>
<comment type="subcellular location">
    <subcellularLocation>
        <location evidence="1">Cytoplasm</location>
    </subcellularLocation>
</comment>
<comment type="similarity">
    <text evidence="1">Belongs to the class-V pyridoxal-phosphate-dependent aminotransferase family. SerC subfamily.</text>
</comment>
<organism>
    <name type="scientific">Shewanella baltica (strain OS195)</name>
    <dbReference type="NCBI Taxonomy" id="399599"/>
    <lineage>
        <taxon>Bacteria</taxon>
        <taxon>Pseudomonadati</taxon>
        <taxon>Pseudomonadota</taxon>
        <taxon>Gammaproteobacteria</taxon>
        <taxon>Alteromonadales</taxon>
        <taxon>Shewanellaceae</taxon>
        <taxon>Shewanella</taxon>
    </lineage>
</organism>
<keyword id="KW-0028">Amino-acid biosynthesis</keyword>
<keyword id="KW-0032">Aminotransferase</keyword>
<keyword id="KW-0963">Cytoplasm</keyword>
<keyword id="KW-0663">Pyridoxal phosphate</keyword>
<keyword id="KW-0664">Pyridoxine biosynthesis</keyword>
<keyword id="KW-0718">Serine biosynthesis</keyword>
<keyword id="KW-0808">Transferase</keyword>
<name>SERC_SHEB9</name>
<sequence length="363" mass="39853">MSAIYNFCAGPAMLPAAVMKKAQQELLDWNGQGVSVMEISHRSKEFIALTEQAESDLRELMQIPANYHVLFMHGGGRGQFSAVVNNFLGEQGKALYLVSGQWSSAALAEAQKLAGEAQIDSLNIVEKHNGLNAVVLPDLHKIDADYRYVHYCPNETVDGIEIFDELDSPWPIVADLSSTIMSREIDVSRYGLIYAGAQKNIGPSGLSIVIVRDDMLKLPSLPQSSIMDYRLAVEHDSMFNTPPTFAWYLAAEVFAWLKSTGGISSIAKINQQKAQMLYQCIDGNAFYRNGVVAANRSQMNVTFQLVNEALDGEFLKQAQIAGLVALKGHRIVGGMRASLYNAMPLDGIVALVKFMNEFAAKHS</sequence>
<feature type="chain" id="PRO_1000203565" description="Phosphoserine aminotransferase">
    <location>
        <begin position="1"/>
        <end position="363"/>
    </location>
</feature>
<feature type="binding site" evidence="1">
    <location>
        <position position="42"/>
    </location>
    <ligand>
        <name>L-glutamate</name>
        <dbReference type="ChEBI" id="CHEBI:29985"/>
    </ligand>
</feature>
<feature type="binding site" evidence="1">
    <location>
        <begin position="76"/>
        <end position="77"/>
    </location>
    <ligand>
        <name>pyridoxal 5'-phosphate</name>
        <dbReference type="ChEBI" id="CHEBI:597326"/>
    </ligand>
</feature>
<feature type="binding site" evidence="1">
    <location>
        <position position="102"/>
    </location>
    <ligand>
        <name>pyridoxal 5'-phosphate</name>
        <dbReference type="ChEBI" id="CHEBI:597326"/>
    </ligand>
</feature>
<feature type="binding site" evidence="1">
    <location>
        <position position="156"/>
    </location>
    <ligand>
        <name>pyridoxal 5'-phosphate</name>
        <dbReference type="ChEBI" id="CHEBI:597326"/>
    </ligand>
</feature>
<feature type="binding site" evidence="1">
    <location>
        <position position="175"/>
    </location>
    <ligand>
        <name>pyridoxal 5'-phosphate</name>
        <dbReference type="ChEBI" id="CHEBI:597326"/>
    </ligand>
</feature>
<feature type="binding site" evidence="1">
    <location>
        <position position="198"/>
    </location>
    <ligand>
        <name>pyridoxal 5'-phosphate</name>
        <dbReference type="ChEBI" id="CHEBI:597326"/>
    </ligand>
</feature>
<feature type="binding site" evidence="1">
    <location>
        <begin position="240"/>
        <end position="241"/>
    </location>
    <ligand>
        <name>pyridoxal 5'-phosphate</name>
        <dbReference type="ChEBI" id="CHEBI:597326"/>
    </ligand>
</feature>
<feature type="modified residue" description="N6-(pyridoxal phosphate)lysine" evidence="1">
    <location>
        <position position="199"/>
    </location>
</feature>
<evidence type="ECO:0000255" key="1">
    <source>
        <dbReference type="HAMAP-Rule" id="MF_00160"/>
    </source>
</evidence>
<protein>
    <recommendedName>
        <fullName evidence="1">Phosphoserine aminotransferase</fullName>
        <ecNumber evidence="1">2.6.1.52</ecNumber>
    </recommendedName>
    <alternativeName>
        <fullName evidence="1">Phosphohydroxythreonine aminotransferase</fullName>
        <shortName evidence="1">PSAT</shortName>
    </alternativeName>
</protein>
<reference key="1">
    <citation type="submission" date="2007-11" db="EMBL/GenBank/DDBJ databases">
        <title>Complete sequence of chromosome of Shewanella baltica OS195.</title>
        <authorList>
            <consortium name="US DOE Joint Genome Institute"/>
            <person name="Copeland A."/>
            <person name="Lucas S."/>
            <person name="Lapidus A."/>
            <person name="Barry K."/>
            <person name="Glavina del Rio T."/>
            <person name="Dalin E."/>
            <person name="Tice H."/>
            <person name="Pitluck S."/>
            <person name="Chain P."/>
            <person name="Malfatti S."/>
            <person name="Shin M."/>
            <person name="Vergez L."/>
            <person name="Schmutz J."/>
            <person name="Larimer F."/>
            <person name="Land M."/>
            <person name="Hauser L."/>
            <person name="Kyrpides N."/>
            <person name="Kim E."/>
            <person name="Brettar I."/>
            <person name="Rodrigues J."/>
            <person name="Konstantinidis K."/>
            <person name="Klappenbach J."/>
            <person name="Hofle M."/>
            <person name="Tiedje J."/>
            <person name="Richardson P."/>
        </authorList>
    </citation>
    <scope>NUCLEOTIDE SEQUENCE [LARGE SCALE GENOMIC DNA]</scope>
    <source>
        <strain>OS195</strain>
    </source>
</reference>
<gene>
    <name evidence="1" type="primary">serC</name>
    <name type="ordered locus">Sbal195_2403</name>
</gene>